<protein>
    <recommendedName>
        <fullName evidence="1">Glucose-6-phosphate isomerase</fullName>
        <shortName evidence="1">GPI</shortName>
        <ecNumber evidence="1">5.3.1.9</ecNumber>
    </recommendedName>
    <alternativeName>
        <fullName evidence="1">Phosphoglucose isomerase</fullName>
        <shortName evidence="1">PGI</shortName>
    </alternativeName>
    <alternativeName>
        <fullName evidence="1">Phosphohexose isomerase</fullName>
        <shortName evidence="1">PHI</shortName>
    </alternativeName>
</protein>
<proteinExistence type="inferred from homology"/>
<keyword id="KW-0963">Cytoplasm</keyword>
<keyword id="KW-0312">Gluconeogenesis</keyword>
<keyword id="KW-0324">Glycolysis</keyword>
<keyword id="KW-0413">Isomerase</keyword>
<keyword id="KW-1185">Reference proteome</keyword>
<sequence length="526" mass="57479">MDKLQLWQRYQNWLYYHEGLGIYLDISRMRFDDPFVDRLKPKFDKAFQDMEALEAGAIANPDEGRMVGHYWLRAPELAPNDEARKEITEPLAAIADFVTKVHNTTIKPPTAEKFTDVLSIGIGGSALGPQFVAEALSSDFPPMAIHFIDNSDPAGIDRILTRLGDRLKSTLVIVTSKSGGTPETRNGMLEVKAAYEAKGLDFAPHAVAVTMPGSKMDQFAENWLARFPMQDWVGGRTSELSAVGLLPAALQGIDIQAMLAGAKEMDVATRVKDLKTNPAALLALAWYYSGNGKGEKDMVILPYKDSLLLFSRYLQQLVMESLGKETDLDGNTVYQGIAVYGNKGSTDQHAYVQQLREGVPNFFATFIEVLEDRQGESIELDPGITSGDYLSGFIQGTRQALYENNRDSVTITIPQVNPRIVGALIALYERTVSFYGSLVNVNAYHQPGVEAGKKMAASILSLQTEIQKVIKESVGSLDLVTLAEKAGDPEAVEAVYKIVRHLAANGRGVTLDGDLANPSSLKVSAG</sequence>
<feature type="chain" id="PRO_1000135524" description="Glucose-6-phosphate isomerase">
    <location>
        <begin position="1"/>
        <end position="526"/>
    </location>
</feature>
<feature type="active site" description="Proton donor" evidence="1">
    <location>
        <position position="320"/>
    </location>
</feature>
<feature type="active site" evidence="1">
    <location>
        <position position="349"/>
    </location>
</feature>
<feature type="active site" evidence="1">
    <location>
        <position position="453"/>
    </location>
</feature>
<comment type="function">
    <text evidence="1">Catalyzes the reversible isomerization of glucose-6-phosphate to fructose-6-phosphate.</text>
</comment>
<comment type="catalytic activity">
    <reaction evidence="1">
        <text>alpha-D-glucose 6-phosphate = beta-D-fructose 6-phosphate</text>
        <dbReference type="Rhea" id="RHEA:11816"/>
        <dbReference type="ChEBI" id="CHEBI:57634"/>
        <dbReference type="ChEBI" id="CHEBI:58225"/>
        <dbReference type="EC" id="5.3.1.9"/>
    </reaction>
</comment>
<comment type="pathway">
    <text evidence="1">Carbohydrate biosynthesis; gluconeogenesis.</text>
</comment>
<comment type="pathway">
    <text evidence="1">Carbohydrate degradation; glycolysis; D-glyceraldehyde 3-phosphate and glycerone phosphate from D-glucose: step 2/4.</text>
</comment>
<comment type="subcellular location">
    <subcellularLocation>
        <location evidence="1">Cytoplasm</location>
    </subcellularLocation>
</comment>
<comment type="similarity">
    <text evidence="1">Belongs to the GPI family.</text>
</comment>
<evidence type="ECO:0000255" key="1">
    <source>
        <dbReference type="HAMAP-Rule" id="MF_00473"/>
    </source>
</evidence>
<gene>
    <name evidence="1" type="primary">pgi</name>
    <name type="ordered locus">PCC8801_0439</name>
</gene>
<accession>B7JUF5</accession>
<reference key="1">
    <citation type="journal article" date="2011" name="MBio">
        <title>Novel metabolic attributes of the genus Cyanothece, comprising a group of unicellular nitrogen-fixing Cyanobacteria.</title>
        <authorList>
            <person name="Bandyopadhyay A."/>
            <person name="Elvitigala T."/>
            <person name="Welsh E."/>
            <person name="Stockel J."/>
            <person name="Liberton M."/>
            <person name="Min H."/>
            <person name="Sherman L.A."/>
            <person name="Pakrasi H.B."/>
        </authorList>
    </citation>
    <scope>NUCLEOTIDE SEQUENCE [LARGE SCALE GENOMIC DNA]</scope>
    <source>
        <strain>PCC 8801 / RF-1</strain>
    </source>
</reference>
<organism>
    <name type="scientific">Rippkaea orientalis (strain PCC 8801 / RF-1)</name>
    <name type="common">Cyanothece sp. (strain PCC 8801)</name>
    <dbReference type="NCBI Taxonomy" id="41431"/>
    <lineage>
        <taxon>Bacteria</taxon>
        <taxon>Bacillati</taxon>
        <taxon>Cyanobacteriota</taxon>
        <taxon>Cyanophyceae</taxon>
        <taxon>Oscillatoriophycideae</taxon>
        <taxon>Chroococcales</taxon>
        <taxon>Aphanothecaceae</taxon>
        <taxon>Rippkaea</taxon>
        <taxon>Rippkaea orientalis</taxon>
    </lineage>
</organism>
<name>G6PI_RIPO1</name>
<dbReference type="EC" id="5.3.1.9" evidence="1"/>
<dbReference type="EMBL" id="CP001287">
    <property type="protein sequence ID" value="ACK64535.1"/>
    <property type="molecule type" value="Genomic_DNA"/>
</dbReference>
<dbReference type="RefSeq" id="WP_012593812.1">
    <property type="nucleotide sequence ID" value="NC_011726.1"/>
</dbReference>
<dbReference type="SMR" id="B7JUF5"/>
<dbReference type="STRING" id="41431.PCC8801_0439"/>
<dbReference type="KEGG" id="cyp:PCC8801_0439"/>
<dbReference type="eggNOG" id="COG0166">
    <property type="taxonomic scope" value="Bacteria"/>
</dbReference>
<dbReference type="HOGENOM" id="CLU_033288_0_0_3"/>
<dbReference type="OrthoDB" id="140919at2"/>
<dbReference type="UniPathway" id="UPA00109">
    <property type="reaction ID" value="UER00181"/>
</dbReference>
<dbReference type="UniPathway" id="UPA00138"/>
<dbReference type="Proteomes" id="UP000008204">
    <property type="component" value="Chromosome"/>
</dbReference>
<dbReference type="GO" id="GO:0005829">
    <property type="term" value="C:cytosol"/>
    <property type="evidence" value="ECO:0007669"/>
    <property type="project" value="TreeGrafter"/>
</dbReference>
<dbReference type="GO" id="GO:0097367">
    <property type="term" value="F:carbohydrate derivative binding"/>
    <property type="evidence" value="ECO:0007669"/>
    <property type="project" value="InterPro"/>
</dbReference>
<dbReference type="GO" id="GO:0004347">
    <property type="term" value="F:glucose-6-phosphate isomerase activity"/>
    <property type="evidence" value="ECO:0007669"/>
    <property type="project" value="UniProtKB-UniRule"/>
</dbReference>
<dbReference type="GO" id="GO:0048029">
    <property type="term" value="F:monosaccharide binding"/>
    <property type="evidence" value="ECO:0007669"/>
    <property type="project" value="TreeGrafter"/>
</dbReference>
<dbReference type="GO" id="GO:0006094">
    <property type="term" value="P:gluconeogenesis"/>
    <property type="evidence" value="ECO:0007669"/>
    <property type="project" value="UniProtKB-UniRule"/>
</dbReference>
<dbReference type="GO" id="GO:0051156">
    <property type="term" value="P:glucose 6-phosphate metabolic process"/>
    <property type="evidence" value="ECO:0007669"/>
    <property type="project" value="TreeGrafter"/>
</dbReference>
<dbReference type="GO" id="GO:0006096">
    <property type="term" value="P:glycolytic process"/>
    <property type="evidence" value="ECO:0007669"/>
    <property type="project" value="UniProtKB-UniRule"/>
</dbReference>
<dbReference type="CDD" id="cd05015">
    <property type="entry name" value="SIS_PGI_1"/>
    <property type="match status" value="1"/>
</dbReference>
<dbReference type="CDD" id="cd05016">
    <property type="entry name" value="SIS_PGI_2"/>
    <property type="match status" value="1"/>
</dbReference>
<dbReference type="FunFam" id="3.40.50.10490:FF:000021">
    <property type="entry name" value="Glucose-6-phosphate isomerase"/>
    <property type="match status" value="1"/>
</dbReference>
<dbReference type="FunFam" id="3.40.50.10490:FF:000023">
    <property type="entry name" value="Glucose-6-phosphate isomerase"/>
    <property type="match status" value="1"/>
</dbReference>
<dbReference type="Gene3D" id="3.40.50.10490">
    <property type="entry name" value="Glucose-6-phosphate isomerase like protein, domain 1"/>
    <property type="match status" value="2"/>
</dbReference>
<dbReference type="HAMAP" id="MF_00473">
    <property type="entry name" value="G6P_isomerase"/>
    <property type="match status" value="1"/>
</dbReference>
<dbReference type="InterPro" id="IPR001672">
    <property type="entry name" value="G6P_Isomerase"/>
</dbReference>
<dbReference type="InterPro" id="IPR018189">
    <property type="entry name" value="Phosphoglucose_isomerase_CS"/>
</dbReference>
<dbReference type="InterPro" id="IPR046348">
    <property type="entry name" value="SIS_dom_sf"/>
</dbReference>
<dbReference type="InterPro" id="IPR035476">
    <property type="entry name" value="SIS_PGI_1"/>
</dbReference>
<dbReference type="InterPro" id="IPR035482">
    <property type="entry name" value="SIS_PGI_2"/>
</dbReference>
<dbReference type="NCBIfam" id="NF010696">
    <property type="entry name" value="PRK14096.1"/>
    <property type="match status" value="1"/>
</dbReference>
<dbReference type="PANTHER" id="PTHR11469">
    <property type="entry name" value="GLUCOSE-6-PHOSPHATE ISOMERASE"/>
    <property type="match status" value="1"/>
</dbReference>
<dbReference type="PANTHER" id="PTHR11469:SF1">
    <property type="entry name" value="GLUCOSE-6-PHOSPHATE ISOMERASE"/>
    <property type="match status" value="1"/>
</dbReference>
<dbReference type="Pfam" id="PF00342">
    <property type="entry name" value="PGI"/>
    <property type="match status" value="2"/>
</dbReference>
<dbReference type="PRINTS" id="PR00662">
    <property type="entry name" value="G6PISOMERASE"/>
</dbReference>
<dbReference type="SUPFAM" id="SSF53697">
    <property type="entry name" value="SIS domain"/>
    <property type="match status" value="1"/>
</dbReference>
<dbReference type="PROSITE" id="PS00174">
    <property type="entry name" value="P_GLUCOSE_ISOMERASE_2"/>
    <property type="match status" value="1"/>
</dbReference>
<dbReference type="PROSITE" id="PS51463">
    <property type="entry name" value="P_GLUCOSE_ISOMERASE_3"/>
    <property type="match status" value="1"/>
</dbReference>